<gene>
    <name type="primary">Slc48a1</name>
    <name type="synonym">Hrg1</name>
</gene>
<feature type="chain" id="PRO_0000348576" description="Heme transporter HRG1">
    <location>
        <begin position="1"/>
        <end position="146"/>
    </location>
</feature>
<feature type="transmembrane region" description="Helical" evidence="1">
    <location>
        <begin position="12"/>
        <end position="32"/>
    </location>
</feature>
<feature type="transmembrane region" description="Helical" evidence="1">
    <location>
        <begin position="40"/>
        <end position="60"/>
    </location>
</feature>
<feature type="transmembrane region" description="Helical" evidence="1">
    <location>
        <begin position="74"/>
        <end position="94"/>
    </location>
</feature>
<feature type="transmembrane region" description="Helical" evidence="1">
    <location>
        <begin position="110"/>
        <end position="130"/>
    </location>
</feature>
<feature type="short sequence motif" description="Di-leucine motif">
    <location>
        <begin position="142"/>
        <end position="143"/>
    </location>
</feature>
<feature type="sequence conflict" description="In Ref. 1; BAB22311." evidence="4" ref="1">
    <original>T</original>
    <variation>N</variation>
    <location>
        <position position="98"/>
    </location>
</feature>
<feature type="sequence conflict" description="In Ref. 1; BAE23759." evidence="4" ref="1">
    <original>Y</original>
    <variation>C</variation>
    <location>
        <position position="109"/>
    </location>
</feature>
<proteinExistence type="evidence at transcript level"/>
<organism>
    <name type="scientific">Mus musculus</name>
    <name type="common">Mouse</name>
    <dbReference type="NCBI Taxonomy" id="10090"/>
    <lineage>
        <taxon>Eukaryota</taxon>
        <taxon>Metazoa</taxon>
        <taxon>Chordata</taxon>
        <taxon>Craniata</taxon>
        <taxon>Vertebrata</taxon>
        <taxon>Euteleostomi</taxon>
        <taxon>Mammalia</taxon>
        <taxon>Eutheria</taxon>
        <taxon>Euarchontoglires</taxon>
        <taxon>Glires</taxon>
        <taxon>Rodentia</taxon>
        <taxon>Myomorpha</taxon>
        <taxon>Muroidea</taxon>
        <taxon>Muridae</taxon>
        <taxon>Murinae</taxon>
        <taxon>Mus</taxon>
        <taxon>Mus</taxon>
    </lineage>
</organism>
<protein>
    <recommendedName>
        <fullName>Heme transporter HRG1</fullName>
    </recommendedName>
    <alternativeName>
        <fullName>Heme-responsive gene 1 protein homolog</fullName>
        <shortName>HRG-1</shortName>
    </alternativeName>
    <alternativeName>
        <fullName>Solute carrier family 48 member 1</fullName>
    </alternativeName>
</protein>
<reference key="1">
    <citation type="journal article" date="2005" name="Science">
        <title>The transcriptional landscape of the mammalian genome.</title>
        <authorList>
            <person name="Carninci P."/>
            <person name="Kasukawa T."/>
            <person name="Katayama S."/>
            <person name="Gough J."/>
            <person name="Frith M.C."/>
            <person name="Maeda N."/>
            <person name="Oyama R."/>
            <person name="Ravasi T."/>
            <person name="Lenhard B."/>
            <person name="Wells C."/>
            <person name="Kodzius R."/>
            <person name="Shimokawa K."/>
            <person name="Bajic V.B."/>
            <person name="Brenner S.E."/>
            <person name="Batalov S."/>
            <person name="Forrest A.R."/>
            <person name="Zavolan M."/>
            <person name="Davis M.J."/>
            <person name="Wilming L.G."/>
            <person name="Aidinis V."/>
            <person name="Allen J.E."/>
            <person name="Ambesi-Impiombato A."/>
            <person name="Apweiler R."/>
            <person name="Aturaliya R.N."/>
            <person name="Bailey T.L."/>
            <person name="Bansal M."/>
            <person name="Baxter L."/>
            <person name="Beisel K.W."/>
            <person name="Bersano T."/>
            <person name="Bono H."/>
            <person name="Chalk A.M."/>
            <person name="Chiu K.P."/>
            <person name="Choudhary V."/>
            <person name="Christoffels A."/>
            <person name="Clutterbuck D.R."/>
            <person name="Crowe M.L."/>
            <person name="Dalla E."/>
            <person name="Dalrymple B.P."/>
            <person name="de Bono B."/>
            <person name="Della Gatta G."/>
            <person name="di Bernardo D."/>
            <person name="Down T."/>
            <person name="Engstrom P."/>
            <person name="Fagiolini M."/>
            <person name="Faulkner G."/>
            <person name="Fletcher C.F."/>
            <person name="Fukushima T."/>
            <person name="Furuno M."/>
            <person name="Futaki S."/>
            <person name="Gariboldi M."/>
            <person name="Georgii-Hemming P."/>
            <person name="Gingeras T.R."/>
            <person name="Gojobori T."/>
            <person name="Green R.E."/>
            <person name="Gustincich S."/>
            <person name="Harbers M."/>
            <person name="Hayashi Y."/>
            <person name="Hensch T.K."/>
            <person name="Hirokawa N."/>
            <person name="Hill D."/>
            <person name="Huminiecki L."/>
            <person name="Iacono M."/>
            <person name="Ikeo K."/>
            <person name="Iwama A."/>
            <person name="Ishikawa T."/>
            <person name="Jakt M."/>
            <person name="Kanapin A."/>
            <person name="Katoh M."/>
            <person name="Kawasawa Y."/>
            <person name="Kelso J."/>
            <person name="Kitamura H."/>
            <person name="Kitano H."/>
            <person name="Kollias G."/>
            <person name="Krishnan S.P."/>
            <person name="Kruger A."/>
            <person name="Kummerfeld S.K."/>
            <person name="Kurochkin I.V."/>
            <person name="Lareau L.F."/>
            <person name="Lazarevic D."/>
            <person name="Lipovich L."/>
            <person name="Liu J."/>
            <person name="Liuni S."/>
            <person name="McWilliam S."/>
            <person name="Madan Babu M."/>
            <person name="Madera M."/>
            <person name="Marchionni L."/>
            <person name="Matsuda H."/>
            <person name="Matsuzawa S."/>
            <person name="Miki H."/>
            <person name="Mignone F."/>
            <person name="Miyake S."/>
            <person name="Morris K."/>
            <person name="Mottagui-Tabar S."/>
            <person name="Mulder N."/>
            <person name="Nakano N."/>
            <person name="Nakauchi H."/>
            <person name="Ng P."/>
            <person name="Nilsson R."/>
            <person name="Nishiguchi S."/>
            <person name="Nishikawa S."/>
            <person name="Nori F."/>
            <person name="Ohara O."/>
            <person name="Okazaki Y."/>
            <person name="Orlando V."/>
            <person name="Pang K.C."/>
            <person name="Pavan W.J."/>
            <person name="Pavesi G."/>
            <person name="Pesole G."/>
            <person name="Petrovsky N."/>
            <person name="Piazza S."/>
            <person name="Reed J."/>
            <person name="Reid J.F."/>
            <person name="Ring B.Z."/>
            <person name="Ringwald M."/>
            <person name="Rost B."/>
            <person name="Ruan Y."/>
            <person name="Salzberg S.L."/>
            <person name="Sandelin A."/>
            <person name="Schneider C."/>
            <person name="Schoenbach C."/>
            <person name="Sekiguchi K."/>
            <person name="Semple C.A."/>
            <person name="Seno S."/>
            <person name="Sessa L."/>
            <person name="Sheng Y."/>
            <person name="Shibata Y."/>
            <person name="Shimada H."/>
            <person name="Shimada K."/>
            <person name="Silva D."/>
            <person name="Sinclair B."/>
            <person name="Sperling S."/>
            <person name="Stupka E."/>
            <person name="Sugiura K."/>
            <person name="Sultana R."/>
            <person name="Takenaka Y."/>
            <person name="Taki K."/>
            <person name="Tammoja K."/>
            <person name="Tan S.L."/>
            <person name="Tang S."/>
            <person name="Taylor M.S."/>
            <person name="Tegner J."/>
            <person name="Teichmann S.A."/>
            <person name="Ueda H.R."/>
            <person name="van Nimwegen E."/>
            <person name="Verardo R."/>
            <person name="Wei C.L."/>
            <person name="Yagi K."/>
            <person name="Yamanishi H."/>
            <person name="Zabarovsky E."/>
            <person name="Zhu S."/>
            <person name="Zimmer A."/>
            <person name="Hide W."/>
            <person name="Bult C."/>
            <person name="Grimmond S.M."/>
            <person name="Teasdale R.D."/>
            <person name="Liu E.T."/>
            <person name="Brusic V."/>
            <person name="Quackenbush J."/>
            <person name="Wahlestedt C."/>
            <person name="Mattick J.S."/>
            <person name="Hume D.A."/>
            <person name="Kai C."/>
            <person name="Sasaki D."/>
            <person name="Tomaru Y."/>
            <person name="Fukuda S."/>
            <person name="Kanamori-Katayama M."/>
            <person name="Suzuki M."/>
            <person name="Aoki J."/>
            <person name="Arakawa T."/>
            <person name="Iida J."/>
            <person name="Imamura K."/>
            <person name="Itoh M."/>
            <person name="Kato T."/>
            <person name="Kawaji H."/>
            <person name="Kawagashira N."/>
            <person name="Kawashima T."/>
            <person name="Kojima M."/>
            <person name="Kondo S."/>
            <person name="Konno H."/>
            <person name="Nakano K."/>
            <person name="Ninomiya N."/>
            <person name="Nishio T."/>
            <person name="Okada M."/>
            <person name="Plessy C."/>
            <person name="Shibata K."/>
            <person name="Shiraki T."/>
            <person name="Suzuki S."/>
            <person name="Tagami M."/>
            <person name="Waki K."/>
            <person name="Watahiki A."/>
            <person name="Okamura-Oho Y."/>
            <person name="Suzuki H."/>
            <person name="Kawai J."/>
            <person name="Hayashizaki Y."/>
        </authorList>
    </citation>
    <scope>NUCLEOTIDE SEQUENCE [LARGE SCALE MRNA]</scope>
    <source>
        <strain>C57BL/6J</strain>
        <strain>NOD</strain>
        <tissue>Bone marrow</tissue>
        <tissue>Kidney</tissue>
        <tissue>Pancreas</tissue>
        <tissue>Thymus</tissue>
    </source>
</reference>
<reference key="2">
    <citation type="journal article" date="2004" name="Genome Res.">
        <title>The status, quality, and expansion of the NIH full-length cDNA project: the Mammalian Gene Collection (MGC).</title>
        <authorList>
            <consortium name="The MGC Project Team"/>
        </authorList>
    </citation>
    <scope>NUCLEOTIDE SEQUENCE [LARGE SCALE MRNA]</scope>
    <source>
        <strain>FVB/N</strain>
        <tissue>Kidney</tissue>
    </source>
</reference>
<reference key="3">
    <citation type="journal article" date="2013" name="Cell Metab.">
        <title>HRG1 is essential for heme transport from the phagolysosome of macrophages during erythrophagocytosis.</title>
        <authorList>
            <person name="White C."/>
            <person name="Yuan X."/>
            <person name="Schmidt P.J."/>
            <person name="Bresciani E."/>
            <person name="Samuel T.K."/>
            <person name="Campagna D."/>
            <person name="Hall C."/>
            <person name="Bishop K."/>
            <person name="Calicchio M.L."/>
            <person name="Lapierre A."/>
            <person name="Ward D.M."/>
            <person name="Liu P."/>
            <person name="Fleming M.D."/>
            <person name="Hamza I."/>
        </authorList>
    </citation>
    <scope>FUNCTION</scope>
    <scope>TRANSPORTER ACTIVITY</scope>
    <scope>TISSUE SPECIFICITY</scope>
    <scope>SUBCELLULAR LOCATION</scope>
</reference>
<reference key="4">
    <citation type="journal article" date="2020" name="Front. Genome Ed.">
        <title>Normal Iron Homeostasis Requires the Transporter SLC48A1 for Efficient Heme-Iron Recycling in Mammals.</title>
        <authorList>
            <person name="Simmons W.R."/>
            <person name="Wain L."/>
            <person name="Toker J."/>
            <person name="Jagadeesh J."/>
            <person name="Garrett L.J."/>
            <person name="Pek R.H."/>
            <person name="Hamza I."/>
            <person name="Bodine D.M."/>
        </authorList>
    </citation>
    <scope>FUNCTION</scope>
    <scope>DISRUPTION PHENOTYPE</scope>
    <scope>TISSUE SPECIFICITY</scope>
</reference>
<comment type="function">
    <text evidence="2 3">Heme transporter that regulates intracellular heme availability through the endosomal or lysosomal compartment. In macrophages of the reticuloendothelial system, is the heme transporter for heme-iron recycling. Essential for macrophage iron homeostasis, transports heme from the phagolysosome to the cytoplasm during erythrophagocytosis (EP).</text>
</comment>
<comment type="catalytic activity">
    <reaction evidence="5">
        <text>heme b(in) = heme b(out)</text>
        <dbReference type="Rhea" id="RHEA:75443"/>
        <dbReference type="ChEBI" id="CHEBI:60344"/>
    </reaction>
</comment>
<comment type="subcellular location">
    <subcellularLocation>
        <location evidence="2">Endosome membrane</location>
        <topology evidence="1">Multi-pass membrane protein</topology>
    </subcellularLocation>
    <subcellularLocation>
        <location evidence="2">Lysosome membrane</location>
        <topology evidence="1">Multi-pass membrane protein</topology>
    </subcellularLocation>
    <subcellularLocation>
        <location evidence="2">Cytoplasmic vesicle</location>
        <location evidence="2">Phagosome membrane</location>
        <topology evidence="1">Multi-pass membrane protein</topology>
    </subcellularLocation>
    <text evidence="2">In macrophages, specifically localizes to the phagolysosomal membranes during erythrophagocytosis.</text>
</comment>
<comment type="tissue specificity">
    <text evidence="2">Strongly expressed in macrophages of the reticuloendothelial system.</text>
</comment>
<comment type="disruption phenotype">
    <text evidence="3">Deficient mice fed the standard laboratory rodent diet have peripheral blood counts that are all within the normal range, including the red cell indices. No differences between male and female animals. They show 15% increase in the size of the spleen in. Mutants have hemozoin beginning to accumulate in reticuloendothelial system macrophages 8 days after birth. They require more dietary iron to maintain erythropoiesis than littermate control animals.</text>
</comment>
<comment type="similarity">
    <text evidence="4">Belongs to the HRG family.</text>
</comment>
<keyword id="KW-0968">Cytoplasmic vesicle</keyword>
<keyword id="KW-0967">Endosome</keyword>
<keyword id="KW-0458">Lysosome</keyword>
<keyword id="KW-0472">Membrane</keyword>
<keyword id="KW-1185">Reference proteome</keyword>
<keyword id="KW-0812">Transmembrane</keyword>
<keyword id="KW-1133">Transmembrane helix</keyword>
<keyword id="KW-0813">Transport</keyword>
<evidence type="ECO:0000255" key="1"/>
<evidence type="ECO:0000269" key="2">
    <source>
    </source>
</evidence>
<evidence type="ECO:0000269" key="3">
    <source>
    </source>
</evidence>
<evidence type="ECO:0000305" key="4"/>
<evidence type="ECO:0000305" key="5">
    <source>
    </source>
</evidence>
<sequence length="146" mass="16489">MAPSRLQLGLRAAYSGFSSVAGFSIFFVWTVVYRQPGTAAMGGLAGVLALWVLVTHVMYMQDYWRTWLRGLRGFFFVGALFSAVSVSAFCTFLALAITQHQSLKDPNSYYLSCVWSFISFKWAFLLSLYAHRYRADFADISILSDF</sequence>
<accession>Q9D8M3</accession>
<accession>Q3UU69</accession>
<accession>Q9DCK0</accession>
<name>HRG1_MOUSE</name>
<dbReference type="EMBL" id="AK002729">
    <property type="protein sequence ID" value="BAB22311.1"/>
    <property type="molecule type" value="mRNA"/>
</dbReference>
<dbReference type="EMBL" id="AK007888">
    <property type="protein sequence ID" value="BAB25331.1"/>
    <property type="molecule type" value="mRNA"/>
</dbReference>
<dbReference type="EMBL" id="AK088485">
    <property type="protein sequence ID" value="BAC40384.1"/>
    <property type="molecule type" value="mRNA"/>
</dbReference>
<dbReference type="EMBL" id="AK089421">
    <property type="protein sequence ID" value="BAC40874.1"/>
    <property type="molecule type" value="mRNA"/>
</dbReference>
<dbReference type="EMBL" id="AK138729">
    <property type="protein sequence ID" value="BAE23759.1"/>
    <property type="molecule type" value="mRNA"/>
</dbReference>
<dbReference type="EMBL" id="AK150552">
    <property type="protein sequence ID" value="BAE29654.1"/>
    <property type="molecule type" value="mRNA"/>
</dbReference>
<dbReference type="EMBL" id="AK155824">
    <property type="protein sequence ID" value="BAE33448.1"/>
    <property type="molecule type" value="mRNA"/>
</dbReference>
<dbReference type="EMBL" id="AK159879">
    <property type="protein sequence ID" value="BAE35451.1"/>
    <property type="molecule type" value="mRNA"/>
</dbReference>
<dbReference type="EMBL" id="AK159892">
    <property type="protein sequence ID" value="BAE35459.1"/>
    <property type="molecule type" value="mRNA"/>
</dbReference>
<dbReference type="EMBL" id="AK159898">
    <property type="protein sequence ID" value="BAE35464.1"/>
    <property type="molecule type" value="mRNA"/>
</dbReference>
<dbReference type="EMBL" id="AK170393">
    <property type="protein sequence ID" value="BAE41765.1"/>
    <property type="molecule type" value="mRNA"/>
</dbReference>
<dbReference type="EMBL" id="BC022913">
    <property type="protein sequence ID" value="AAH22913.1"/>
    <property type="molecule type" value="mRNA"/>
</dbReference>
<dbReference type="CCDS" id="CCDS49715.1"/>
<dbReference type="RefSeq" id="NP_080629.1">
    <property type="nucleotide sequence ID" value="NM_026353.4"/>
</dbReference>
<dbReference type="SMR" id="Q9D8M3"/>
<dbReference type="BioGRID" id="212409">
    <property type="interactions" value="1"/>
</dbReference>
<dbReference type="FunCoup" id="Q9D8M3">
    <property type="interactions" value="287"/>
</dbReference>
<dbReference type="IntAct" id="Q9D8M3">
    <property type="interactions" value="1"/>
</dbReference>
<dbReference type="STRING" id="10090.ENSMUSP00000112644"/>
<dbReference type="iPTMnet" id="Q9D8M3"/>
<dbReference type="PhosphoSitePlus" id="Q9D8M3"/>
<dbReference type="jPOST" id="Q9D8M3"/>
<dbReference type="PaxDb" id="10090-ENSMUSP00000112644"/>
<dbReference type="PeptideAtlas" id="Q9D8M3"/>
<dbReference type="Antibodypedia" id="25407">
    <property type="antibodies" value="20 antibodies from 11 providers"/>
</dbReference>
<dbReference type="DNASU" id="67739"/>
<dbReference type="Ensembl" id="ENSMUST00000117892.2">
    <property type="protein sequence ID" value="ENSMUSP00000112644.2"/>
    <property type="gene ID" value="ENSMUSG00000081534.4"/>
</dbReference>
<dbReference type="GeneID" id="67739"/>
<dbReference type="KEGG" id="mmu:67739"/>
<dbReference type="UCSC" id="uc007xlb.2">
    <property type="organism name" value="mouse"/>
</dbReference>
<dbReference type="AGR" id="MGI:1914989"/>
<dbReference type="CTD" id="55652"/>
<dbReference type="MGI" id="MGI:1914989">
    <property type="gene designation" value="Slc48a1"/>
</dbReference>
<dbReference type="VEuPathDB" id="HostDB:ENSMUSG00000081534"/>
<dbReference type="eggNOG" id="ENOG502S0AI">
    <property type="taxonomic scope" value="Eukaryota"/>
</dbReference>
<dbReference type="GeneTree" id="ENSGT00390000002307"/>
<dbReference type="HOGENOM" id="CLU_148774_0_0_1"/>
<dbReference type="InParanoid" id="Q9D8M3"/>
<dbReference type="OMA" id="RIHISIG"/>
<dbReference type="OrthoDB" id="5954402at2759"/>
<dbReference type="PhylomeDB" id="Q9D8M3"/>
<dbReference type="TreeFam" id="TF332621"/>
<dbReference type="BioGRID-ORCS" id="67739">
    <property type="hits" value="4 hits in 77 CRISPR screens"/>
</dbReference>
<dbReference type="ChiTaRS" id="Slc48a1">
    <property type="organism name" value="mouse"/>
</dbReference>
<dbReference type="PRO" id="PR:Q9D8M3"/>
<dbReference type="Proteomes" id="UP000000589">
    <property type="component" value="Chromosome 15"/>
</dbReference>
<dbReference type="RNAct" id="Q9D8M3">
    <property type="molecule type" value="protein"/>
</dbReference>
<dbReference type="Bgee" id="ENSMUSG00000081534">
    <property type="expression patterns" value="Expressed in blood and 246 other cell types or tissues"/>
</dbReference>
<dbReference type="ExpressionAtlas" id="Q9D8M3">
    <property type="expression patterns" value="baseline and differential"/>
</dbReference>
<dbReference type="GO" id="GO:0005737">
    <property type="term" value="C:cytoplasm"/>
    <property type="evidence" value="ECO:0000314"/>
    <property type="project" value="MGI"/>
</dbReference>
<dbReference type="GO" id="GO:0036019">
    <property type="term" value="C:endolysosome"/>
    <property type="evidence" value="ECO:0000314"/>
    <property type="project" value="MGI"/>
</dbReference>
<dbReference type="GO" id="GO:0010008">
    <property type="term" value="C:endosome membrane"/>
    <property type="evidence" value="ECO:0007669"/>
    <property type="project" value="UniProtKB-SubCell"/>
</dbReference>
<dbReference type="GO" id="GO:0061474">
    <property type="term" value="C:phagolysosome membrane"/>
    <property type="evidence" value="ECO:0000315"/>
    <property type="project" value="MGI"/>
</dbReference>
<dbReference type="GO" id="GO:0005886">
    <property type="term" value="C:plasma membrane"/>
    <property type="evidence" value="ECO:0007669"/>
    <property type="project" value="Ensembl"/>
</dbReference>
<dbReference type="GO" id="GO:0020037">
    <property type="term" value="F:heme binding"/>
    <property type="evidence" value="ECO:0007669"/>
    <property type="project" value="Ensembl"/>
</dbReference>
<dbReference type="GO" id="GO:0015232">
    <property type="term" value="F:heme transmembrane transporter activity"/>
    <property type="evidence" value="ECO:0000315"/>
    <property type="project" value="MGI"/>
</dbReference>
<dbReference type="GO" id="GO:0030218">
    <property type="term" value="P:erythrocyte differentiation"/>
    <property type="evidence" value="ECO:0000315"/>
    <property type="project" value="MGI"/>
</dbReference>
<dbReference type="GO" id="GO:0097037">
    <property type="term" value="P:heme export"/>
    <property type="evidence" value="ECO:0000315"/>
    <property type="project" value="MGI"/>
</dbReference>
<dbReference type="GO" id="GO:0140357">
    <property type="term" value="P:heme export from vacuole to cytoplasm"/>
    <property type="evidence" value="ECO:0000315"/>
    <property type="project" value="MGI"/>
</dbReference>
<dbReference type="GO" id="GO:0042168">
    <property type="term" value="P:heme metabolic process"/>
    <property type="evidence" value="ECO:0000315"/>
    <property type="project" value="MGI"/>
</dbReference>
<dbReference type="GO" id="GO:0051674">
    <property type="term" value="P:localization of cell"/>
    <property type="evidence" value="ECO:0000315"/>
    <property type="project" value="MGI"/>
</dbReference>
<dbReference type="GO" id="GO:0007041">
    <property type="term" value="P:lysosomal transport"/>
    <property type="evidence" value="ECO:0000315"/>
    <property type="project" value="MGI"/>
</dbReference>
<dbReference type="GO" id="GO:0006909">
    <property type="term" value="P:phagocytosis"/>
    <property type="evidence" value="ECO:0000315"/>
    <property type="project" value="MGI"/>
</dbReference>
<dbReference type="InterPro" id="IPR026218">
    <property type="entry name" value="HRG"/>
</dbReference>
<dbReference type="PANTHER" id="PTHR31525">
    <property type="entry name" value="HEME TRANSPORTER HRG1"/>
    <property type="match status" value="1"/>
</dbReference>
<dbReference type="PANTHER" id="PTHR31525:SF1">
    <property type="entry name" value="HEME TRANSPORTER HRG1"/>
    <property type="match status" value="1"/>
</dbReference>
<dbReference type="Pfam" id="PF16954">
    <property type="entry name" value="HRG"/>
    <property type="match status" value="2"/>
</dbReference>
<dbReference type="PRINTS" id="PR02095">
    <property type="entry name" value="TRNSPORTRHRG"/>
</dbReference>